<name>PTH_PELPD</name>
<evidence type="ECO:0000255" key="1">
    <source>
        <dbReference type="HAMAP-Rule" id="MF_00083"/>
    </source>
</evidence>
<gene>
    <name evidence="1" type="primary">pth</name>
    <name type="ordered locus">Ppro_0745</name>
</gene>
<keyword id="KW-0963">Cytoplasm</keyword>
<keyword id="KW-0378">Hydrolase</keyword>
<keyword id="KW-1185">Reference proteome</keyword>
<keyword id="KW-0694">RNA-binding</keyword>
<keyword id="KW-0820">tRNA-binding</keyword>
<protein>
    <recommendedName>
        <fullName evidence="1">Peptidyl-tRNA hydrolase</fullName>
        <shortName evidence="1">Pth</shortName>
        <ecNumber evidence="1">3.1.1.29</ecNumber>
    </recommendedName>
</protein>
<dbReference type="EC" id="3.1.1.29" evidence="1"/>
<dbReference type="EMBL" id="CP000482">
    <property type="protein sequence ID" value="ABK98375.1"/>
    <property type="molecule type" value="Genomic_DNA"/>
</dbReference>
<dbReference type="RefSeq" id="WP_011734687.1">
    <property type="nucleotide sequence ID" value="NC_008609.1"/>
</dbReference>
<dbReference type="SMR" id="A1AM05"/>
<dbReference type="STRING" id="338966.Ppro_0745"/>
<dbReference type="KEGG" id="ppd:Ppro_0745"/>
<dbReference type="eggNOG" id="COG0193">
    <property type="taxonomic scope" value="Bacteria"/>
</dbReference>
<dbReference type="HOGENOM" id="CLU_062456_4_1_7"/>
<dbReference type="OrthoDB" id="9800507at2"/>
<dbReference type="Proteomes" id="UP000006732">
    <property type="component" value="Chromosome"/>
</dbReference>
<dbReference type="GO" id="GO:0005737">
    <property type="term" value="C:cytoplasm"/>
    <property type="evidence" value="ECO:0007669"/>
    <property type="project" value="UniProtKB-SubCell"/>
</dbReference>
<dbReference type="GO" id="GO:0004045">
    <property type="term" value="F:peptidyl-tRNA hydrolase activity"/>
    <property type="evidence" value="ECO:0007669"/>
    <property type="project" value="UniProtKB-UniRule"/>
</dbReference>
<dbReference type="GO" id="GO:0000049">
    <property type="term" value="F:tRNA binding"/>
    <property type="evidence" value="ECO:0007669"/>
    <property type="project" value="UniProtKB-UniRule"/>
</dbReference>
<dbReference type="GO" id="GO:0006515">
    <property type="term" value="P:protein quality control for misfolded or incompletely synthesized proteins"/>
    <property type="evidence" value="ECO:0007669"/>
    <property type="project" value="UniProtKB-UniRule"/>
</dbReference>
<dbReference type="GO" id="GO:0072344">
    <property type="term" value="P:rescue of stalled ribosome"/>
    <property type="evidence" value="ECO:0007669"/>
    <property type="project" value="UniProtKB-UniRule"/>
</dbReference>
<dbReference type="CDD" id="cd00462">
    <property type="entry name" value="PTH"/>
    <property type="match status" value="1"/>
</dbReference>
<dbReference type="FunFam" id="3.40.50.1470:FF:000001">
    <property type="entry name" value="Peptidyl-tRNA hydrolase"/>
    <property type="match status" value="1"/>
</dbReference>
<dbReference type="Gene3D" id="3.40.50.1470">
    <property type="entry name" value="Peptidyl-tRNA hydrolase"/>
    <property type="match status" value="1"/>
</dbReference>
<dbReference type="HAMAP" id="MF_00083">
    <property type="entry name" value="Pept_tRNA_hydro_bact"/>
    <property type="match status" value="1"/>
</dbReference>
<dbReference type="InterPro" id="IPR001328">
    <property type="entry name" value="Pept_tRNA_hydro"/>
</dbReference>
<dbReference type="InterPro" id="IPR018171">
    <property type="entry name" value="Pept_tRNA_hydro_CS"/>
</dbReference>
<dbReference type="InterPro" id="IPR036416">
    <property type="entry name" value="Pept_tRNA_hydro_sf"/>
</dbReference>
<dbReference type="NCBIfam" id="TIGR00447">
    <property type="entry name" value="pth"/>
    <property type="match status" value="1"/>
</dbReference>
<dbReference type="PANTHER" id="PTHR17224">
    <property type="entry name" value="PEPTIDYL-TRNA HYDROLASE"/>
    <property type="match status" value="1"/>
</dbReference>
<dbReference type="PANTHER" id="PTHR17224:SF1">
    <property type="entry name" value="PEPTIDYL-TRNA HYDROLASE"/>
    <property type="match status" value="1"/>
</dbReference>
<dbReference type="Pfam" id="PF01195">
    <property type="entry name" value="Pept_tRNA_hydro"/>
    <property type="match status" value="1"/>
</dbReference>
<dbReference type="SUPFAM" id="SSF53178">
    <property type="entry name" value="Peptidyl-tRNA hydrolase-like"/>
    <property type="match status" value="1"/>
</dbReference>
<dbReference type="PROSITE" id="PS01195">
    <property type="entry name" value="PEPT_TRNA_HYDROL_1"/>
    <property type="match status" value="1"/>
</dbReference>
<dbReference type="PROSITE" id="PS01196">
    <property type="entry name" value="PEPT_TRNA_HYDROL_2"/>
    <property type="match status" value="1"/>
</dbReference>
<sequence length="193" mass="21541">MSMHIIAGLGNPGSHYQWTRHNAGFLFLDRLAHLENVSITRKSFSGLAGEWSRANCRHILLKPQTFMNLSGRSVMQALQFYKLPLSQAIVVHDDLDLPFGTVRLKQGGGHGGHNGLRSIMEQLGKGDFIRLRVGIGRPLHGDTVNYVLGSMPPEQMELLPRILDGGLEMLEMLLDQGLPKAMSLFNNRNFLEK</sequence>
<proteinExistence type="inferred from homology"/>
<reference key="1">
    <citation type="submission" date="2006-10" db="EMBL/GenBank/DDBJ databases">
        <title>Complete sequence of chromosome of Pelobacter propionicus DSM 2379.</title>
        <authorList>
            <consortium name="US DOE Joint Genome Institute"/>
            <person name="Copeland A."/>
            <person name="Lucas S."/>
            <person name="Lapidus A."/>
            <person name="Barry K."/>
            <person name="Detter J.C."/>
            <person name="Glavina del Rio T."/>
            <person name="Hammon N."/>
            <person name="Israni S."/>
            <person name="Dalin E."/>
            <person name="Tice H."/>
            <person name="Pitluck S."/>
            <person name="Saunders E."/>
            <person name="Brettin T."/>
            <person name="Bruce D."/>
            <person name="Han C."/>
            <person name="Tapia R."/>
            <person name="Schmutz J."/>
            <person name="Larimer F."/>
            <person name="Land M."/>
            <person name="Hauser L."/>
            <person name="Kyrpides N."/>
            <person name="Kim E."/>
            <person name="Lovley D."/>
            <person name="Richardson P."/>
        </authorList>
    </citation>
    <scope>NUCLEOTIDE SEQUENCE [LARGE SCALE GENOMIC DNA]</scope>
    <source>
        <strain>DSM 2379 / NBRC 103807 / OttBd1</strain>
    </source>
</reference>
<comment type="function">
    <text evidence="1">Hydrolyzes ribosome-free peptidyl-tRNAs (with 1 or more amino acids incorporated), which drop off the ribosome during protein synthesis, or as a result of ribosome stalling.</text>
</comment>
<comment type="function">
    <text evidence="1">Catalyzes the release of premature peptidyl moieties from peptidyl-tRNA molecules trapped in stalled 50S ribosomal subunits, and thus maintains levels of free tRNAs and 50S ribosomes.</text>
</comment>
<comment type="catalytic activity">
    <reaction evidence="1">
        <text>an N-acyl-L-alpha-aminoacyl-tRNA + H2O = an N-acyl-L-amino acid + a tRNA + H(+)</text>
        <dbReference type="Rhea" id="RHEA:54448"/>
        <dbReference type="Rhea" id="RHEA-COMP:10123"/>
        <dbReference type="Rhea" id="RHEA-COMP:13883"/>
        <dbReference type="ChEBI" id="CHEBI:15377"/>
        <dbReference type="ChEBI" id="CHEBI:15378"/>
        <dbReference type="ChEBI" id="CHEBI:59874"/>
        <dbReference type="ChEBI" id="CHEBI:78442"/>
        <dbReference type="ChEBI" id="CHEBI:138191"/>
        <dbReference type="EC" id="3.1.1.29"/>
    </reaction>
</comment>
<comment type="subunit">
    <text evidence="1">Monomer.</text>
</comment>
<comment type="subcellular location">
    <subcellularLocation>
        <location evidence="1">Cytoplasm</location>
    </subcellularLocation>
</comment>
<comment type="similarity">
    <text evidence="1">Belongs to the PTH family.</text>
</comment>
<feature type="chain" id="PRO_1000010624" description="Peptidyl-tRNA hydrolase">
    <location>
        <begin position="1"/>
        <end position="193"/>
    </location>
</feature>
<feature type="active site" description="Proton acceptor" evidence="1">
    <location>
        <position position="21"/>
    </location>
</feature>
<feature type="binding site" evidence="1">
    <location>
        <position position="16"/>
    </location>
    <ligand>
        <name>tRNA</name>
        <dbReference type="ChEBI" id="CHEBI:17843"/>
    </ligand>
</feature>
<feature type="binding site" evidence="1">
    <location>
        <position position="66"/>
    </location>
    <ligand>
        <name>tRNA</name>
        <dbReference type="ChEBI" id="CHEBI:17843"/>
    </ligand>
</feature>
<feature type="binding site" evidence="1">
    <location>
        <position position="68"/>
    </location>
    <ligand>
        <name>tRNA</name>
        <dbReference type="ChEBI" id="CHEBI:17843"/>
    </ligand>
</feature>
<feature type="binding site" evidence="1">
    <location>
        <position position="114"/>
    </location>
    <ligand>
        <name>tRNA</name>
        <dbReference type="ChEBI" id="CHEBI:17843"/>
    </ligand>
</feature>
<feature type="site" description="Discriminates between blocked and unblocked aminoacyl-tRNA" evidence="1">
    <location>
        <position position="11"/>
    </location>
</feature>
<feature type="site" description="Stabilizes the basic form of H active site to accept a proton" evidence="1">
    <location>
        <position position="93"/>
    </location>
</feature>
<organism>
    <name type="scientific">Pelobacter propionicus (strain DSM 2379 / NBRC 103807 / OttBd1)</name>
    <dbReference type="NCBI Taxonomy" id="338966"/>
    <lineage>
        <taxon>Bacteria</taxon>
        <taxon>Pseudomonadati</taxon>
        <taxon>Thermodesulfobacteriota</taxon>
        <taxon>Desulfuromonadia</taxon>
        <taxon>Desulfuromonadales</taxon>
        <taxon>Desulfuromonadaceae</taxon>
        <taxon>Pelobacter</taxon>
    </lineage>
</organism>
<accession>A1AM05</accession>